<feature type="chain" id="PRO_0000180203" description="Acyl carrier protein">
    <location>
        <begin position="1"/>
        <end position="74"/>
    </location>
</feature>
<feature type="domain" description="Carrier" evidence="2">
    <location>
        <begin position="1"/>
        <end position="73"/>
    </location>
</feature>
<feature type="modified residue" description="O-(pantetheine 4'-phosphoryl)serine" evidence="2">
    <location>
        <position position="35"/>
    </location>
</feature>
<reference key="1">
    <citation type="journal article" date="2004" name="J. Infect. Dis.">
        <title>Progress toward characterization of the group A Streptococcus metagenome: complete genome sequence of a macrolide-resistant serotype M6 strain.</title>
        <authorList>
            <person name="Banks D.J."/>
            <person name="Porcella S.F."/>
            <person name="Barbian K.D."/>
            <person name="Beres S.B."/>
            <person name="Philips L.E."/>
            <person name="Voyich J.M."/>
            <person name="DeLeo F.R."/>
            <person name="Martin J.M."/>
            <person name="Somerville G.A."/>
            <person name="Musser J.M."/>
        </authorList>
    </citation>
    <scope>NUCLEOTIDE SEQUENCE [LARGE SCALE GENOMIC DNA]</scope>
    <source>
        <strain>ATCC BAA-946 / MGAS10394</strain>
    </source>
</reference>
<sequence>MAVFEKVQEIIVEELGKETEEVTLETTFDDLDADSLDVFQVISEIEDAFDIQIETEEGLNTVGDLVAYVEEKSK</sequence>
<comment type="function">
    <text evidence="1">Carrier of the growing fatty acid chain in fatty acid biosynthesis.</text>
</comment>
<comment type="pathway">
    <text evidence="1">Lipid metabolism; fatty acid biosynthesis.</text>
</comment>
<comment type="subcellular location">
    <subcellularLocation>
        <location evidence="1">Cytoplasm</location>
    </subcellularLocation>
</comment>
<comment type="PTM">
    <text evidence="1">4'-phosphopantetheine is transferred from CoA to a specific serine of apo-ACP by AcpS. This modification is essential for activity because fatty acids are bound in thioester linkage to the sulfhydryl of the prosthetic group.</text>
</comment>
<comment type="similarity">
    <text evidence="1">Belongs to the acyl carrier protein (ACP) family.</text>
</comment>
<name>ACP_STRP6</name>
<dbReference type="EMBL" id="CP000003">
    <property type="protein sequence ID" value="AAT87622.1"/>
    <property type="molecule type" value="Genomic_DNA"/>
</dbReference>
<dbReference type="RefSeq" id="WP_002983328.1">
    <property type="nucleotide sequence ID" value="NC_006086.1"/>
</dbReference>
<dbReference type="SMR" id="Q5XAE1"/>
<dbReference type="KEGG" id="spa:M6_Spy1487"/>
<dbReference type="HOGENOM" id="CLU_108696_5_0_9"/>
<dbReference type="UniPathway" id="UPA00094"/>
<dbReference type="Proteomes" id="UP000001167">
    <property type="component" value="Chromosome"/>
</dbReference>
<dbReference type="GO" id="GO:0005829">
    <property type="term" value="C:cytosol"/>
    <property type="evidence" value="ECO:0007669"/>
    <property type="project" value="TreeGrafter"/>
</dbReference>
<dbReference type="GO" id="GO:0016020">
    <property type="term" value="C:membrane"/>
    <property type="evidence" value="ECO:0007669"/>
    <property type="project" value="GOC"/>
</dbReference>
<dbReference type="GO" id="GO:0000035">
    <property type="term" value="F:acyl binding"/>
    <property type="evidence" value="ECO:0007669"/>
    <property type="project" value="TreeGrafter"/>
</dbReference>
<dbReference type="GO" id="GO:0000036">
    <property type="term" value="F:acyl carrier activity"/>
    <property type="evidence" value="ECO:0007669"/>
    <property type="project" value="UniProtKB-UniRule"/>
</dbReference>
<dbReference type="GO" id="GO:0009245">
    <property type="term" value="P:lipid A biosynthetic process"/>
    <property type="evidence" value="ECO:0007669"/>
    <property type="project" value="TreeGrafter"/>
</dbReference>
<dbReference type="Gene3D" id="1.10.1200.10">
    <property type="entry name" value="ACP-like"/>
    <property type="match status" value="1"/>
</dbReference>
<dbReference type="HAMAP" id="MF_01217">
    <property type="entry name" value="Acyl_carrier"/>
    <property type="match status" value="1"/>
</dbReference>
<dbReference type="InterPro" id="IPR003231">
    <property type="entry name" value="ACP"/>
</dbReference>
<dbReference type="InterPro" id="IPR036736">
    <property type="entry name" value="ACP-like_sf"/>
</dbReference>
<dbReference type="InterPro" id="IPR009081">
    <property type="entry name" value="PP-bd_ACP"/>
</dbReference>
<dbReference type="NCBIfam" id="NF002148">
    <property type="entry name" value="PRK00982.1-2"/>
    <property type="match status" value="1"/>
</dbReference>
<dbReference type="NCBIfam" id="NF002150">
    <property type="entry name" value="PRK00982.1-4"/>
    <property type="match status" value="1"/>
</dbReference>
<dbReference type="PANTHER" id="PTHR20863">
    <property type="entry name" value="ACYL CARRIER PROTEIN"/>
    <property type="match status" value="1"/>
</dbReference>
<dbReference type="PANTHER" id="PTHR20863:SF62">
    <property type="entry name" value="ACYL CARRIER PROTEIN"/>
    <property type="match status" value="1"/>
</dbReference>
<dbReference type="Pfam" id="PF00550">
    <property type="entry name" value="PP-binding"/>
    <property type="match status" value="1"/>
</dbReference>
<dbReference type="SUPFAM" id="SSF47336">
    <property type="entry name" value="ACP-like"/>
    <property type="match status" value="1"/>
</dbReference>
<dbReference type="PROSITE" id="PS50075">
    <property type="entry name" value="CARRIER"/>
    <property type="match status" value="1"/>
</dbReference>
<gene>
    <name evidence="1" type="primary">acpP</name>
    <name type="ordered locus">M6_Spy1487</name>
</gene>
<accession>Q5XAE1</accession>
<evidence type="ECO:0000255" key="1">
    <source>
        <dbReference type="HAMAP-Rule" id="MF_01217"/>
    </source>
</evidence>
<evidence type="ECO:0000255" key="2">
    <source>
        <dbReference type="PROSITE-ProRule" id="PRU00258"/>
    </source>
</evidence>
<proteinExistence type="inferred from homology"/>
<protein>
    <recommendedName>
        <fullName evidence="1">Acyl carrier protein</fullName>
        <shortName evidence="1">ACP</shortName>
    </recommendedName>
</protein>
<keyword id="KW-0963">Cytoplasm</keyword>
<keyword id="KW-0275">Fatty acid biosynthesis</keyword>
<keyword id="KW-0276">Fatty acid metabolism</keyword>
<keyword id="KW-0444">Lipid biosynthesis</keyword>
<keyword id="KW-0443">Lipid metabolism</keyword>
<keyword id="KW-0596">Phosphopantetheine</keyword>
<keyword id="KW-0597">Phosphoprotein</keyword>
<organism>
    <name type="scientific">Streptococcus pyogenes serotype M6 (strain ATCC BAA-946 / MGAS10394)</name>
    <dbReference type="NCBI Taxonomy" id="286636"/>
    <lineage>
        <taxon>Bacteria</taxon>
        <taxon>Bacillati</taxon>
        <taxon>Bacillota</taxon>
        <taxon>Bacilli</taxon>
        <taxon>Lactobacillales</taxon>
        <taxon>Streptococcaceae</taxon>
        <taxon>Streptococcus</taxon>
    </lineage>
</organism>